<name>MUTT_ECOLI</name>
<keyword id="KW-0002">3D-structure</keyword>
<keyword id="KW-0903">Direct protein sequencing</keyword>
<keyword id="KW-0227">DNA damage</keyword>
<keyword id="KW-0234">DNA repair</keyword>
<keyword id="KW-0235">DNA replication</keyword>
<keyword id="KW-0378">Hydrolase</keyword>
<keyword id="KW-0460">Magnesium</keyword>
<keyword id="KW-0479">Metal-binding</keyword>
<keyword id="KW-0515">Mutator protein</keyword>
<keyword id="KW-1185">Reference proteome</keyword>
<feature type="chain" id="PRO_0000056943" description="8-oxo-dGTP diphosphatase">
    <location>
        <begin position="1"/>
        <end position="129"/>
    </location>
</feature>
<feature type="domain" description="Nudix hydrolase" evidence="1">
    <location>
        <begin position="1"/>
        <end position="129"/>
    </location>
</feature>
<feature type="short sequence motif" description="Nudix box" evidence="1">
    <location>
        <begin position="38"/>
        <end position="59"/>
    </location>
</feature>
<feature type="binding site" evidence="15">
    <location>
        <position position="23"/>
    </location>
    <ligand>
        <name>8-oxo-dGTP</name>
        <dbReference type="ChEBI" id="CHEBI:77896"/>
    </ligand>
</feature>
<feature type="binding site" evidence="15">
    <location>
        <position position="28"/>
    </location>
    <ligand>
        <name>8-oxo-dGTP</name>
        <dbReference type="ChEBI" id="CHEBI:77896"/>
    </ligand>
</feature>
<feature type="binding site" evidence="15">
    <location>
        <begin position="34"/>
        <end position="37"/>
    </location>
    <ligand>
        <name>8-oxo-dGTP</name>
        <dbReference type="ChEBI" id="CHEBI:77896"/>
    </ligand>
</feature>
<feature type="binding site" evidence="6">
    <location>
        <position position="37"/>
    </location>
    <ligand>
        <name>Mg(2+)</name>
        <dbReference type="ChEBI" id="CHEBI:18420"/>
    </ligand>
</feature>
<feature type="binding site" evidence="6">
    <location>
        <position position="57"/>
    </location>
    <ligand>
        <name>Mg(2+)</name>
        <dbReference type="ChEBI" id="CHEBI:18420"/>
    </ligand>
</feature>
<feature type="binding site" evidence="14 15">
    <location>
        <position position="119"/>
    </location>
    <ligand>
        <name>8-oxo-dGTP</name>
        <dbReference type="ChEBI" id="CHEBI:77896"/>
    </ligand>
</feature>
<feature type="strand" evidence="30">
    <location>
        <begin position="2"/>
        <end position="12"/>
    </location>
</feature>
<feature type="strand" evidence="30">
    <location>
        <begin position="16"/>
        <end position="22"/>
    </location>
</feature>
<feature type="turn" evidence="28">
    <location>
        <begin position="24"/>
        <end position="26"/>
    </location>
</feature>
<feature type="turn" evidence="30">
    <location>
        <begin position="28"/>
        <end position="31"/>
    </location>
</feature>
<feature type="strand" evidence="30">
    <location>
        <begin position="36"/>
        <end position="39"/>
    </location>
</feature>
<feature type="strand" evidence="26">
    <location>
        <begin position="40"/>
        <end position="42"/>
    </location>
</feature>
<feature type="helix" evidence="30">
    <location>
        <begin position="46"/>
        <end position="58"/>
    </location>
</feature>
<feature type="strand" evidence="29">
    <location>
        <begin position="61"/>
        <end position="64"/>
    </location>
</feature>
<feature type="strand" evidence="30">
    <location>
        <begin position="66"/>
        <end position="75"/>
    </location>
</feature>
<feature type="strand" evidence="30">
    <location>
        <begin position="78"/>
        <end position="87"/>
    </location>
</feature>
<feature type="strand" evidence="30">
    <location>
        <begin position="90"/>
        <end position="92"/>
    </location>
</feature>
<feature type="strand" evidence="27">
    <location>
        <begin position="98"/>
        <end position="100"/>
    </location>
</feature>
<feature type="strand" evidence="30">
    <location>
        <begin position="102"/>
        <end position="106"/>
    </location>
</feature>
<feature type="turn" evidence="30">
    <location>
        <begin position="107"/>
        <end position="109"/>
    </location>
</feature>
<feature type="helix" evidence="30">
    <location>
        <begin position="112"/>
        <end position="114"/>
    </location>
</feature>
<feature type="helix" evidence="30">
    <location>
        <begin position="117"/>
        <end position="119"/>
    </location>
</feature>
<feature type="helix" evidence="30">
    <location>
        <begin position="120"/>
        <end position="126"/>
    </location>
</feature>
<reference key="1">
    <citation type="journal article" date="1987" name="Mol. Gen. Genet.">
        <title>Molecular cloning and nucleotide sequence of the mutT mutator of Escherichia coli that causes A:T to C:G transversion.</title>
        <authorList>
            <person name="Akiyama M."/>
            <person name="Horiuchi T."/>
            <person name="Sekiguchi M."/>
        </authorList>
    </citation>
    <scope>NUCLEOTIDE SEQUENCE [GENOMIC DNA]</scope>
    <source>
        <strain>K12</strain>
    </source>
</reference>
<reference key="2">
    <citation type="journal article" date="1992" name="Nucleic Acids Res.">
        <title>Systematic sequencing of the Escherichia coli genome: analysis of the 0-2.4 min region.</title>
        <authorList>
            <person name="Yura T."/>
            <person name="Mori H."/>
            <person name="Nagai H."/>
            <person name="Nagata T."/>
            <person name="Ishihama A."/>
            <person name="Fujita N."/>
            <person name="Isono K."/>
            <person name="Mizobuchi K."/>
            <person name="Nakata A."/>
        </authorList>
    </citation>
    <scope>NUCLEOTIDE SEQUENCE [LARGE SCALE GENOMIC DNA]</scope>
    <source>
        <strain>K12</strain>
    </source>
</reference>
<reference key="3">
    <citation type="journal article" date="1997" name="Science">
        <title>The complete genome sequence of Escherichia coli K-12.</title>
        <authorList>
            <person name="Blattner F.R."/>
            <person name="Plunkett G. III"/>
            <person name="Bloch C.A."/>
            <person name="Perna N.T."/>
            <person name="Burland V."/>
            <person name="Riley M."/>
            <person name="Collado-Vides J."/>
            <person name="Glasner J.D."/>
            <person name="Rode C.K."/>
            <person name="Mayhew G.F."/>
            <person name="Gregor J."/>
            <person name="Davis N.W."/>
            <person name="Kirkpatrick H.A."/>
            <person name="Goeden M.A."/>
            <person name="Rose D.J."/>
            <person name="Mau B."/>
            <person name="Shao Y."/>
        </authorList>
    </citation>
    <scope>NUCLEOTIDE SEQUENCE [LARGE SCALE GENOMIC DNA]</scope>
    <source>
        <strain>K12 / MG1655 / ATCC 47076</strain>
    </source>
</reference>
<reference key="4">
    <citation type="journal article" date="2006" name="Mol. Syst. Biol.">
        <title>Highly accurate genome sequences of Escherichia coli K-12 strains MG1655 and W3110.</title>
        <authorList>
            <person name="Hayashi K."/>
            <person name="Morooka N."/>
            <person name="Yamamoto Y."/>
            <person name="Fujita K."/>
            <person name="Isono K."/>
            <person name="Choi S."/>
            <person name="Ohtsubo E."/>
            <person name="Baba T."/>
            <person name="Wanner B.L."/>
            <person name="Mori H."/>
            <person name="Horiuchi T."/>
        </authorList>
    </citation>
    <scope>NUCLEOTIDE SEQUENCE [LARGE SCALE GENOMIC DNA]</scope>
    <source>
        <strain>K12 / W3110 / ATCC 27325 / DSM 5911</strain>
    </source>
</reference>
<reference key="5">
    <citation type="journal article" date="1988" name="J. Bacteriol.">
        <title>Nucleotide sequence of the secA gene and secA(Ts) mutations preventing protein export in Escherichia coli.</title>
        <authorList>
            <person name="Schmidt M."/>
            <person name="Rollo E."/>
            <person name="Grodberg J."/>
            <person name="Oliver D."/>
        </authorList>
    </citation>
    <scope>NUCLEOTIDE SEQUENCE [GENOMIC DNA] OF 1-75</scope>
    <source>
        <strain>K12</strain>
    </source>
</reference>
<reference key="6">
    <citation type="journal article" date="1994" name="Nucleic Acids Res.">
        <title>Systematic sequencing of the Escherichia coli genome: analysis of the 2.4-4.1 min (110,917-193,643 bp) region.</title>
        <authorList>
            <person name="Fujita N."/>
            <person name="Mori H."/>
            <person name="Yura T."/>
            <person name="Ishihama A."/>
        </authorList>
    </citation>
    <scope>NUCLEOTIDE SEQUENCE [GENOMIC DNA] OF 74-129</scope>
    <source>
        <strain>K12 / W3110 / ATCC 27325 / DSM 5911</strain>
    </source>
</reference>
<reference key="7">
    <citation type="journal article" date="1988" name="J. Biol. Chem.">
        <title>Studies on the mutator gene, mutT of Escherichia coli. Molecular cloning of the gene, purification of the gene product, and identification of a novel nucleoside triphosphatase.</title>
        <authorList>
            <person name="Bhatnagar S.K."/>
            <person name="Bessman M.J."/>
        </authorList>
    </citation>
    <scope>PROTEIN SEQUENCE OF 1-20</scope>
    <source>
        <strain>K12</strain>
    </source>
</reference>
<reference key="8">
    <citation type="journal article" date="1991" name="J. Biol. Chem.">
        <title>Characterization of the mutT nucleoside triphosphatase of Escherichia coli.</title>
        <authorList>
            <person name="Bhatnagar S.K."/>
            <person name="Bullions L.C."/>
            <person name="Bessman M.J."/>
        </authorList>
    </citation>
    <scope>FUNCTION</scope>
    <scope>COFACTOR</scope>
    <scope>BIOPHYSICOCHEMICAL PROPERTIES</scope>
</reference>
<reference key="9">
    <citation type="journal article" date="1992" name="Nature">
        <title>MutT protein specifically hydrolyses a potent mutagenic substrate for DNA synthesis.</title>
        <authorList>
            <person name="Maki H."/>
            <person name="Sekiguchi M."/>
        </authorList>
    </citation>
    <scope>FUNCTION</scope>
    <scope>CATALYTIC ACTIVITY</scope>
    <scope>BIOPHYSICOCHEMICAL PROPERTIES</scope>
</reference>
<reference key="10">
    <citation type="journal article" date="1995" name="Mutat. Res.">
        <title>Functional cooperation of MutT, MutM and MutY proteins in preventing mutations caused by spontaneous oxidation of guanine nucleotide in Escherichia coli.</title>
        <authorList>
            <person name="Tajiri T."/>
            <person name="Maki H."/>
            <person name="Sekiguchi M."/>
        </authorList>
    </citation>
    <scope>FUNCTION</scope>
    <scope>DISRUPTION PHENOTYPE</scope>
</reference>
<reference key="11">
    <citation type="journal article" date="1997" name="Science">
        <title>Counteraction by MutT protein of transcriptional errors caused by oxidative damage.</title>
        <authorList>
            <person name="Taddei F."/>
            <person name="Hayakawa H."/>
            <person name="Bouton M."/>
            <person name="Cirinesi A."/>
            <person name="Matic I."/>
            <person name="Sekiguchi M."/>
            <person name="Radman M."/>
        </authorList>
    </citation>
    <scope>FUNCTION</scope>
    <scope>CATALYTIC ACTIVITY</scope>
</reference>
<reference key="12">
    <citation type="journal article" date="2005" name="Biochemistry">
        <title>Multiple enzyme activities of Escherichia coli MutT protein for sanitization of DNA and RNA precursor pools.</title>
        <authorList>
            <person name="Ito R."/>
            <person name="Hayakawa H."/>
            <person name="Sekiguchi M."/>
            <person name="Ishibashi T."/>
        </authorList>
    </citation>
    <scope>FUNCTION</scope>
    <scope>CATALYTIC ACTIVITY</scope>
    <scope>SUBSTRATE SPECIFICITY</scope>
    <scope>BIOPHYSICOCHEMICAL PROPERTIES</scope>
</reference>
<reference key="13">
    <citation type="journal article" date="2013" name="Anal. Biochem.">
        <title>A continuous fluorescence assay for the characterization of Nudix hydrolases.</title>
        <authorList>
            <person name="Xu A."/>
            <person name="Desai A.M."/>
            <person name="Brenner S.E."/>
            <person name="Kirsch J.F."/>
        </authorList>
    </citation>
    <scope>FUNCTION</scope>
    <scope>CATALYTIC ACTIVITY</scope>
    <scope>BIOPHYSICOCHEMICAL PROPERTIES</scope>
</reference>
<reference key="14">
    <citation type="journal article" date="2014" name="Nucleic Acids Res.">
        <title>Removal of 8-oxo-GTP by MutT hydrolase is not a major contributor to transcriptional fidelity.</title>
        <authorList>
            <person name="Gordon A.J."/>
            <person name="Satory D."/>
            <person name="Wang M."/>
            <person name="Halliday J.A."/>
            <person name="Golding I."/>
            <person name="Herman C."/>
        </authorList>
    </citation>
    <scope>FUNCTION</scope>
</reference>
<reference evidence="16" key="15">
    <citation type="journal article" date="1995" name="Biochemistry">
        <title>Solution structure of the MutT enzyme, a nucleoside triphosphate pyrophosphohydrolase.</title>
        <authorList>
            <person name="Abeygunawardana C."/>
            <person name="Weber D.J."/>
            <person name="Gittis A.G."/>
            <person name="Frick D.N."/>
            <person name="Lin J."/>
            <person name="Miller A.F."/>
            <person name="Bessman M.J."/>
            <person name="Mildvan A.S."/>
        </authorList>
    </citation>
    <scope>STRUCTURE BY NMR</scope>
</reference>
<reference evidence="21" key="16">
    <citation type="journal article" date="1997" name="Biochemistry">
        <title>Solution structure of the quaternary MutT-M2+-AMPCPP-M2+ complex and mechanism of its pyrophosphohydrolase action.</title>
        <authorList>
            <person name="Lin J."/>
            <person name="Abeygunawardana C."/>
            <person name="Frick D.N."/>
            <person name="Bessman M.J."/>
            <person name="Mildvan A.S."/>
        </authorList>
    </citation>
    <scope>STRUCTURE BY NMR IN COMPLEX WITH MAGNESIUM IONS AND A SUBSTRATE ANALOG</scope>
    <scope>COFACTOR</scope>
</reference>
<reference evidence="17 18 19 20" key="17">
    <citation type="journal article" date="2003" name="Biochemistry">
        <title>Solution structure and NH exchange studies of the MutT pyrophosphohydrolase complexed with Mg(2+) and 8-oxo-dGMP, a tightly bound product.</title>
        <authorList>
            <person name="Massiah M.A."/>
            <person name="Saraswat V."/>
            <person name="Azurmendi H.F."/>
            <person name="Mildvan A.S."/>
        </authorList>
    </citation>
    <scope>STRUCTURE BY NMR IN COMPLEXES WITH MAGNESIUM IONS AND 8-OXO-DGMP</scope>
    <scope>COFACTOR</scope>
</reference>
<reference evidence="22 23 24 25" key="18">
    <citation type="journal article" date="2010" name="J. Biol. Chem.">
        <title>Structural and dynamic features of the MutT protein in the recognition of nucleotides with the mutagenic 8-oxoguanine base.</title>
        <authorList>
            <person name="Nakamura T."/>
            <person name="Meshitsuka S."/>
            <person name="Kitagawa S."/>
            <person name="Abe N."/>
            <person name="Yamada J."/>
            <person name="Ishino T."/>
            <person name="Nakano H."/>
            <person name="Tsuzuki T."/>
            <person name="Doi T."/>
            <person name="Kobayashi Y."/>
            <person name="Fujii S."/>
            <person name="Sekiguchi M."/>
            <person name="Yamagata Y."/>
        </authorList>
    </citation>
    <scope>X-RAY CRYSTALLOGRAPHY (1.8 ANGSTROMS) IN COMPLEXES WITH 8-OXO-GMP AND MANGANESE IONS</scope>
    <scope>SUBUNIT</scope>
</reference>
<sequence length="129" mass="14927">MKKLQIAVGIIRNENNEIFITRRAADAHMANKLEFPGGKIEMGETPEQAVVRELQEEVGITPQHFSLFEKLEYEFPDRHITLWFWLVERWEGEPWGKEGQPGEWMSLVGLNADDFPPANEPVIAKLKRL</sequence>
<organism>
    <name type="scientific">Escherichia coli (strain K12)</name>
    <dbReference type="NCBI Taxonomy" id="83333"/>
    <lineage>
        <taxon>Bacteria</taxon>
        <taxon>Pseudomonadati</taxon>
        <taxon>Pseudomonadota</taxon>
        <taxon>Gammaproteobacteria</taxon>
        <taxon>Enterobacterales</taxon>
        <taxon>Enterobacteriaceae</taxon>
        <taxon>Escherichia</taxon>
    </lineage>
</organism>
<dbReference type="EC" id="3.6.1.55" evidence="3 4 7 11"/>
<dbReference type="EMBL" id="X04831">
    <property type="protein sequence ID" value="CAA28523.1"/>
    <property type="molecule type" value="Genomic_DNA"/>
</dbReference>
<dbReference type="EMBL" id="M20791">
    <property type="protein sequence ID" value="AAA24620.1"/>
    <property type="molecule type" value="Genomic_DNA"/>
</dbReference>
<dbReference type="EMBL" id="X55034">
    <property type="protein sequence ID" value="CAA38876.1"/>
    <property type="molecule type" value="Genomic_DNA"/>
</dbReference>
<dbReference type="EMBL" id="U00096">
    <property type="protein sequence ID" value="AAC73210.1"/>
    <property type="molecule type" value="Genomic_DNA"/>
</dbReference>
<dbReference type="EMBL" id="AP009048">
    <property type="protein sequence ID" value="BAB96667.1"/>
    <property type="molecule type" value="Genomic_DNA"/>
</dbReference>
<dbReference type="PIR" id="A27890">
    <property type="entry name" value="MVECMT"/>
</dbReference>
<dbReference type="RefSeq" id="NP_414641.1">
    <property type="nucleotide sequence ID" value="NC_000913.3"/>
</dbReference>
<dbReference type="RefSeq" id="WP_000736007.1">
    <property type="nucleotide sequence ID" value="NZ_SSZK01000004.1"/>
</dbReference>
<dbReference type="PDB" id="1MUT">
    <property type="method" value="NMR"/>
    <property type="chains" value="A=1-129"/>
</dbReference>
<dbReference type="PDB" id="1PPX">
    <property type="method" value="NMR"/>
    <property type="chains" value="A=1-129"/>
</dbReference>
<dbReference type="PDB" id="1PUN">
    <property type="method" value="NMR"/>
    <property type="chains" value="A=1-129"/>
</dbReference>
<dbReference type="PDB" id="1PUQ">
    <property type="method" value="NMR"/>
    <property type="chains" value="A=1-129"/>
</dbReference>
<dbReference type="PDB" id="1PUS">
    <property type="method" value="NMR"/>
    <property type="chains" value="A=1-129"/>
</dbReference>
<dbReference type="PDB" id="1TUM">
    <property type="method" value="NMR"/>
    <property type="chains" value="A=1-129"/>
</dbReference>
<dbReference type="PDB" id="3A6S">
    <property type="method" value="X-ray"/>
    <property type="resolution" value="1.80 A"/>
    <property type="chains" value="A/B=1-129"/>
</dbReference>
<dbReference type="PDB" id="3A6T">
    <property type="method" value="X-ray"/>
    <property type="resolution" value="1.96 A"/>
    <property type="chains" value="A=1-129"/>
</dbReference>
<dbReference type="PDB" id="3A6U">
    <property type="method" value="X-ray"/>
    <property type="resolution" value="2.56 A"/>
    <property type="chains" value="A=1-129"/>
</dbReference>
<dbReference type="PDB" id="3A6V">
    <property type="method" value="X-ray"/>
    <property type="resolution" value="2.00 A"/>
    <property type="chains" value="A/B=1-129"/>
</dbReference>
<dbReference type="PDB" id="7WW5">
    <property type="method" value="X-ray"/>
    <property type="resolution" value="1.57 A"/>
    <property type="chains" value="A=1-129"/>
</dbReference>
<dbReference type="PDB" id="7WW6">
    <property type="method" value="X-ray"/>
    <property type="resolution" value="1.36 A"/>
    <property type="chains" value="A=1-129"/>
</dbReference>
<dbReference type="PDB" id="7WW7">
    <property type="method" value="X-ray"/>
    <property type="resolution" value="1.67 A"/>
    <property type="chains" value="A=1-129"/>
</dbReference>
<dbReference type="PDB" id="7WW8">
    <property type="method" value="X-ray"/>
    <property type="resolution" value="1.64 A"/>
    <property type="chains" value="A=1-129"/>
</dbReference>
<dbReference type="PDB" id="7WW9">
    <property type="method" value="X-ray"/>
    <property type="resolution" value="1.80 A"/>
    <property type="chains" value="A=1-129"/>
</dbReference>
<dbReference type="PDB" id="7WWA">
    <property type="method" value="X-ray"/>
    <property type="resolution" value="1.90 A"/>
    <property type="chains" value="A=1-129"/>
</dbReference>
<dbReference type="PDB" id="7X9H">
    <property type="method" value="X-ray"/>
    <property type="resolution" value="1.69 A"/>
    <property type="chains" value="A=1-129"/>
</dbReference>
<dbReference type="PDB" id="7X9I">
    <property type="method" value="X-ray"/>
    <property type="resolution" value="1.90 A"/>
    <property type="chains" value="A=1-129"/>
</dbReference>
<dbReference type="PDB" id="7X9J">
    <property type="method" value="X-ray"/>
    <property type="resolution" value="1.98 A"/>
    <property type="chains" value="A=1-129"/>
</dbReference>
<dbReference type="PDB" id="7X9K">
    <property type="method" value="X-ray"/>
    <property type="resolution" value="1.81 A"/>
    <property type="chains" value="A=1-129"/>
</dbReference>
<dbReference type="PDB" id="7X9L">
    <property type="method" value="X-ray"/>
    <property type="resolution" value="1.82 A"/>
    <property type="chains" value="A=1-129"/>
</dbReference>
<dbReference type="PDB" id="7X9N">
    <property type="method" value="X-ray"/>
    <property type="resolution" value="1.70 A"/>
    <property type="chains" value="A=1-129"/>
</dbReference>
<dbReference type="PDB" id="7X9O">
    <property type="method" value="X-ray"/>
    <property type="resolution" value="1.58 A"/>
    <property type="chains" value="A=1-129"/>
</dbReference>
<dbReference type="PDBsum" id="1MUT"/>
<dbReference type="PDBsum" id="1PPX"/>
<dbReference type="PDBsum" id="1PUN"/>
<dbReference type="PDBsum" id="1PUQ"/>
<dbReference type="PDBsum" id="1PUS"/>
<dbReference type="PDBsum" id="1TUM"/>
<dbReference type="PDBsum" id="3A6S"/>
<dbReference type="PDBsum" id="3A6T"/>
<dbReference type="PDBsum" id="3A6U"/>
<dbReference type="PDBsum" id="3A6V"/>
<dbReference type="PDBsum" id="7WW5"/>
<dbReference type="PDBsum" id="7WW6"/>
<dbReference type="PDBsum" id="7WW7"/>
<dbReference type="PDBsum" id="7WW8"/>
<dbReference type="PDBsum" id="7WW9"/>
<dbReference type="PDBsum" id="7WWA"/>
<dbReference type="PDBsum" id="7X9H"/>
<dbReference type="PDBsum" id="7X9I"/>
<dbReference type="PDBsum" id="7X9J"/>
<dbReference type="PDBsum" id="7X9K"/>
<dbReference type="PDBsum" id="7X9L"/>
<dbReference type="PDBsum" id="7X9N"/>
<dbReference type="PDBsum" id="7X9O"/>
<dbReference type="BMRB" id="P08337"/>
<dbReference type="SMR" id="P08337"/>
<dbReference type="BioGRID" id="4261888">
    <property type="interactions" value="368"/>
</dbReference>
<dbReference type="BioGRID" id="849225">
    <property type="interactions" value="4"/>
</dbReference>
<dbReference type="DIP" id="DIP-10288N"/>
<dbReference type="FunCoup" id="P08337">
    <property type="interactions" value="57"/>
</dbReference>
<dbReference type="IntAct" id="P08337">
    <property type="interactions" value="5"/>
</dbReference>
<dbReference type="STRING" id="511145.b0099"/>
<dbReference type="DrugBank" id="DB02023">
    <property type="generic name" value="8-oxo-dGMP"/>
</dbReference>
<dbReference type="jPOST" id="P08337"/>
<dbReference type="PaxDb" id="511145-b0099"/>
<dbReference type="EnsemblBacteria" id="AAC73210">
    <property type="protein sequence ID" value="AAC73210"/>
    <property type="gene ID" value="b0099"/>
</dbReference>
<dbReference type="GeneID" id="944824"/>
<dbReference type="KEGG" id="ecj:JW0097"/>
<dbReference type="KEGG" id="eco:b0099"/>
<dbReference type="KEGG" id="ecoc:C3026_00400"/>
<dbReference type="PATRIC" id="fig|1411691.4.peg.2181"/>
<dbReference type="EchoBASE" id="EB0621"/>
<dbReference type="eggNOG" id="COG0494">
    <property type="taxonomic scope" value="Bacteria"/>
</dbReference>
<dbReference type="HOGENOM" id="CLU_037162_19_2_6"/>
<dbReference type="InParanoid" id="P08337"/>
<dbReference type="OMA" id="KLEYQFP"/>
<dbReference type="OrthoDB" id="9810648at2"/>
<dbReference type="PhylomeDB" id="P08337"/>
<dbReference type="BioCyc" id="EcoCyc:EG10626-MONOMER"/>
<dbReference type="BioCyc" id="MetaCyc:EG10626-MONOMER"/>
<dbReference type="BRENDA" id="3.6.1.55">
    <property type="organism ID" value="2026"/>
</dbReference>
<dbReference type="SABIO-RK" id="P08337"/>
<dbReference type="EvolutionaryTrace" id="P08337"/>
<dbReference type="PRO" id="PR:P08337"/>
<dbReference type="Proteomes" id="UP000000625">
    <property type="component" value="Chromosome"/>
</dbReference>
<dbReference type="GO" id="GO:0035539">
    <property type="term" value="F:8-oxo-7,8-dihydrodeoxyguanosine triphosphate pyrophosphatase activity"/>
    <property type="evidence" value="ECO:0000314"/>
    <property type="project" value="UniProtKB"/>
</dbReference>
<dbReference type="GO" id="GO:0008413">
    <property type="term" value="F:8-oxo-7,8-dihydroguanosine triphosphate pyrophosphatase activity"/>
    <property type="evidence" value="ECO:0000314"/>
    <property type="project" value="UniProtKB"/>
</dbReference>
<dbReference type="GO" id="GO:0044715">
    <property type="term" value="F:8-oxo-dGDP phosphatase activity"/>
    <property type="evidence" value="ECO:0000314"/>
    <property type="project" value="UniProtKB"/>
</dbReference>
<dbReference type="GO" id="GO:0044716">
    <property type="term" value="F:8-oxo-GDP phosphatase activity"/>
    <property type="evidence" value="ECO:0000314"/>
    <property type="project" value="UniProtKB"/>
</dbReference>
<dbReference type="GO" id="GO:0000287">
    <property type="term" value="F:magnesium ion binding"/>
    <property type="evidence" value="ECO:0000314"/>
    <property type="project" value="EcoCyc"/>
</dbReference>
<dbReference type="GO" id="GO:0030145">
    <property type="term" value="F:manganese ion binding"/>
    <property type="evidence" value="ECO:0000314"/>
    <property type="project" value="EcoCyc"/>
</dbReference>
<dbReference type="GO" id="GO:0046067">
    <property type="term" value="P:dGDP catabolic process"/>
    <property type="evidence" value="ECO:0000314"/>
    <property type="project" value="UniProtKB"/>
</dbReference>
<dbReference type="GO" id="GO:0006203">
    <property type="term" value="P:dGTP catabolic process"/>
    <property type="evidence" value="ECO:0000314"/>
    <property type="project" value="UniProtKB"/>
</dbReference>
<dbReference type="GO" id="GO:0006281">
    <property type="term" value="P:DNA repair"/>
    <property type="evidence" value="ECO:0000269"/>
    <property type="project" value="EcoCyc"/>
</dbReference>
<dbReference type="GO" id="GO:0006260">
    <property type="term" value="P:DNA replication"/>
    <property type="evidence" value="ECO:0000315"/>
    <property type="project" value="UniProtKB"/>
</dbReference>
<dbReference type="GO" id="GO:0006289">
    <property type="term" value="P:nucleotide-excision repair"/>
    <property type="evidence" value="ECO:0000315"/>
    <property type="project" value="UniProtKB"/>
</dbReference>
<dbReference type="CDD" id="cd03425">
    <property type="entry name" value="NUDIX_MutT_NudA_like"/>
    <property type="match status" value="1"/>
</dbReference>
<dbReference type="FunFam" id="3.90.79.10:FF:000014">
    <property type="entry name" value="8-oxo-dGTP diphosphatase MutT"/>
    <property type="match status" value="1"/>
</dbReference>
<dbReference type="Gene3D" id="3.90.79.10">
    <property type="entry name" value="Nucleoside Triphosphate Pyrophosphohydrolase"/>
    <property type="match status" value="1"/>
</dbReference>
<dbReference type="InterPro" id="IPR003561">
    <property type="entry name" value="Mutator_MutT"/>
</dbReference>
<dbReference type="InterPro" id="IPR047127">
    <property type="entry name" value="MutT-like"/>
</dbReference>
<dbReference type="InterPro" id="IPR020476">
    <property type="entry name" value="Nudix_hydrolase"/>
</dbReference>
<dbReference type="InterPro" id="IPR015797">
    <property type="entry name" value="NUDIX_hydrolase-like_dom_sf"/>
</dbReference>
<dbReference type="InterPro" id="IPR020084">
    <property type="entry name" value="NUDIX_hydrolase_CS"/>
</dbReference>
<dbReference type="InterPro" id="IPR000086">
    <property type="entry name" value="NUDIX_hydrolase_dom"/>
</dbReference>
<dbReference type="NCBIfam" id="TIGR00586">
    <property type="entry name" value="mutt"/>
    <property type="match status" value="1"/>
</dbReference>
<dbReference type="NCBIfam" id="NF008044">
    <property type="entry name" value="PRK10776.1"/>
    <property type="match status" value="1"/>
</dbReference>
<dbReference type="PANTHER" id="PTHR47707">
    <property type="entry name" value="8-OXO-DGTP DIPHOSPHATASE"/>
    <property type="match status" value="1"/>
</dbReference>
<dbReference type="PANTHER" id="PTHR47707:SF1">
    <property type="entry name" value="NUDIX HYDROLASE FAMILY PROTEIN"/>
    <property type="match status" value="1"/>
</dbReference>
<dbReference type="Pfam" id="PF00293">
    <property type="entry name" value="NUDIX"/>
    <property type="match status" value="1"/>
</dbReference>
<dbReference type="PRINTS" id="PR01401">
    <property type="entry name" value="MUTATORMUTT"/>
</dbReference>
<dbReference type="PRINTS" id="PR00502">
    <property type="entry name" value="NUDIXFAMILY"/>
</dbReference>
<dbReference type="SUPFAM" id="SSF55811">
    <property type="entry name" value="Nudix"/>
    <property type="match status" value="1"/>
</dbReference>
<dbReference type="PROSITE" id="PS51462">
    <property type="entry name" value="NUDIX"/>
    <property type="match status" value="1"/>
</dbReference>
<dbReference type="PROSITE" id="PS00893">
    <property type="entry name" value="NUDIX_BOX"/>
    <property type="match status" value="1"/>
</dbReference>
<comment type="function">
    <text evidence="3 4 5 7 8 9 11">Specifically hydrolyzes both 8-oxo-deoxyguanosine triphosphate (8-oxo-dGTP) and 8-oxo-guanosine triphosphate (8-oxo-GTP) to the related monophosphates, thereby cleaning up the nucleotide pools and preventing misincorporation of 8-oxoGua into DNA and RNA (PubMed:1309939, PubMed:15850400, PubMed:9311918). It prevents replicational errors by removing an oxidatively damaged form of guanine (8-oxo-dGTP) from DNA and the nucleotide pool (PubMed:1309939). 8-oxo-dGTP can be inserted opposite dA and dC residues of template DNA with almost equal efficiency thus leading to A.T to G.C transversions (PubMed:1309939). MutT may also ensure transcriptional fidelity, removing 8-oxo-GTP from the ribonucleotide triphosphate pool (PubMed:9311918). However, due to the lower efficiency of RNA polymerase 8-oxo-GTP incorporation, MutT is probably not a major contributor to transcriptional fidelity (PubMed:25294823). It also hydrolyzes 8-oxo-dGDP and 8-oxo-GDP to their monophosphate form (PubMed:15850400). In vitro, can also use dGTP, dGDP and other various nucleoside di- and triphosphates, with much lower efficiency (PubMed:1309939, PubMed:15850400, PubMed:1851162, PubMed:23481913). Works cooperatively with MutM and MutY to prevent accumulation in the DNA of oxidized guanine residues (PubMed:7739614).</text>
</comment>
<comment type="catalytic activity">
    <reaction evidence="3 4 7 11">
        <text>8-oxo-dGTP + H2O = 8-oxo-dGMP + diphosphate + H(+)</text>
        <dbReference type="Rhea" id="RHEA:31575"/>
        <dbReference type="ChEBI" id="CHEBI:15377"/>
        <dbReference type="ChEBI" id="CHEBI:15378"/>
        <dbReference type="ChEBI" id="CHEBI:33019"/>
        <dbReference type="ChEBI" id="CHEBI:63224"/>
        <dbReference type="ChEBI" id="CHEBI:77896"/>
        <dbReference type="EC" id="3.6.1.55"/>
    </reaction>
</comment>
<comment type="catalytic activity">
    <reaction evidence="4 7 11">
        <text>8-oxo-GTP + H2O = 8-oxo-GMP + diphosphate + H(+)</text>
        <dbReference type="Rhea" id="RHEA:67616"/>
        <dbReference type="ChEBI" id="CHEBI:15377"/>
        <dbReference type="ChEBI" id="CHEBI:15378"/>
        <dbReference type="ChEBI" id="CHEBI:33019"/>
        <dbReference type="ChEBI" id="CHEBI:143553"/>
        <dbReference type="ChEBI" id="CHEBI:145694"/>
    </reaction>
</comment>
<comment type="catalytic activity">
    <reaction evidence="4">
        <text>8-oxo-dGDP + H2O = 8-oxo-dGMP + phosphate + H(+)</text>
        <dbReference type="Rhea" id="RHEA:32063"/>
        <dbReference type="ChEBI" id="CHEBI:15377"/>
        <dbReference type="ChEBI" id="CHEBI:15378"/>
        <dbReference type="ChEBI" id="CHEBI:43474"/>
        <dbReference type="ChEBI" id="CHEBI:63224"/>
        <dbReference type="ChEBI" id="CHEBI:63715"/>
    </reaction>
</comment>
<comment type="catalytic activity">
    <reaction evidence="4">
        <text>8-oxo-GDP + H2O = 8-oxo-GMP + phosphate + H(+)</text>
        <dbReference type="Rhea" id="RHEA:62356"/>
        <dbReference type="ChEBI" id="CHEBI:15377"/>
        <dbReference type="ChEBI" id="CHEBI:15378"/>
        <dbReference type="ChEBI" id="CHEBI:43474"/>
        <dbReference type="ChEBI" id="CHEBI:143554"/>
        <dbReference type="ChEBI" id="CHEBI:145694"/>
    </reaction>
</comment>
<comment type="cofactor">
    <cofactor evidence="2 5 6 10">
        <name>Mg(2+)</name>
        <dbReference type="ChEBI" id="CHEBI:18420"/>
    </cofactor>
</comment>
<comment type="biophysicochemical properties">
    <kinetics>
        <KM evidence="4">0.058 uM for 8-oxo-dGDP</KM>
        <KM evidence="4">0.081 uM for 8-oxo-dGTP</KM>
        <KM evidence="3">0.48 uM for 8-oxo-dGTP</KM>
        <KM evidence="4">0.045 uM for 8-oxo-GDP</KM>
        <KM evidence="4">0.26 uM for 8-oxo-GTP</KM>
        <KM evidence="4">170 uM for dGDP</KM>
        <KM evidence="3 4">1100 uM for dGTP</KM>
        <KM evidence="5">1500 uM for dGTP</KM>
        <KM evidence="5">2200 uM for dCTP</KM>
        <KM evidence="3">1700 uM for dCTP</KM>
        <KM evidence="3">1800 uM for dTTP</KM>
        <KM evidence="4">350 uM for GDP</KM>
        <KM evidence="4">1000 uM for GTP</KM>
        <KM evidence="3">1200 uM for GTP</KM>
        <KM evidence="7">0.53 uM for 8-oxo-dGTP (at pH 7.6 and 37 degrees Celsius as measured by the Fiske-SubbaRow assay)</KM>
        <KM evidence="7">0.28 uM for 8-oxo-dGTP (at pH 7.6 and 37 degrees Celsius as measured by the Pi sensor assay)</KM>
        <KM evidence="7">0.9 uM for 8-oxo-GTP (at pH 7.6 and 37 degrees Celsius)</KM>
        <Vmax evidence="4">3.7 pmol/min/ng enzyme toward 8-oxo-dGDP</Vmax>
        <Vmax evidence="4">20.0 pmol/min/ng enzyme toward 8-oxo-dGTP</Vmax>
        <Vmax evidence="4">4.8 pmol/min/ng enzyme toward 8-oxo-GDP</Vmax>
        <Vmax evidence="4">22.0 pmol/min/ng enzyme toward 8-oxo-GTP</Vmax>
        <Vmax evidence="4">5.9 pmol/min/ng enzyme toward dGDP</Vmax>
        <Vmax evidence="4">44.0 pmol/min/ng enzyme toward dGTP</Vmax>
        <Vmax evidence="4">3.5 pmol/min/mg enzyme toward GDP</Vmax>
        <Vmax evidence="4">24.0 pmol/min/mg enzyme toward GTP</Vmax>
        <text evidence="7">kcat is 6.9 sec(-1) with 8-oxo-dGTP as substrate measured by the Fiske-SubbaRow assay. kcat is 5.5 sec(-1) with 8-oxo-dGTP as substrate measured by the Pi sensor assay. kcat is 11.2 sec(-1) with 8-oxo-GTP as substrate.</text>
    </kinetics>
    <phDependence>
        <text evidence="5">Optimum pH is 9.0.</text>
    </phDependence>
</comment>
<comment type="subunit">
    <text evidence="6">Monomer.</text>
</comment>
<comment type="interaction">
    <interactant intactId="EBI-1121389">
        <id>P08337</id>
    </interactant>
    <interactant intactId="EBI-906724">
        <id>P0AC47</id>
        <label>frdB</label>
    </interactant>
    <organismsDiffer>false</organismsDiffer>
    <experiments>4</experiments>
</comment>
<comment type="disruption phenotype">
    <text evidence="9">Disruption of the gene increases the rates of A:T to C:G transversion a thousandfold over the wild type level.</text>
</comment>
<comment type="similarity">
    <text evidence="13">Belongs to the Nudix hydrolase family.</text>
</comment>
<protein>
    <recommendedName>
        <fullName>8-oxo-dGTP diphosphatase</fullName>
        <shortName>8-oxo-dGTPase</shortName>
        <ecNumber evidence="3 4 7 11">3.6.1.55</ecNumber>
    </recommendedName>
    <alternativeName>
        <fullName>7,8-dihydro-8-oxoguanine-triphosphatase</fullName>
    </alternativeName>
    <alternativeName>
        <fullName>Mutator protein MutT</fullName>
    </alternativeName>
    <alternativeName>
        <fullName>dGTP pyrophosphohydrolase</fullName>
    </alternativeName>
</protein>
<accession>P08337</accession>
<evidence type="ECO:0000255" key="1">
    <source>
        <dbReference type="PROSITE-ProRule" id="PRU00794"/>
    </source>
</evidence>
<evidence type="ECO:0000269" key="2">
    <source>
    </source>
</evidence>
<evidence type="ECO:0000269" key="3">
    <source>
    </source>
</evidence>
<evidence type="ECO:0000269" key="4">
    <source>
    </source>
</evidence>
<evidence type="ECO:0000269" key="5">
    <source>
    </source>
</evidence>
<evidence type="ECO:0000269" key="6">
    <source>
    </source>
</evidence>
<evidence type="ECO:0000269" key="7">
    <source>
    </source>
</evidence>
<evidence type="ECO:0000269" key="8">
    <source>
    </source>
</evidence>
<evidence type="ECO:0000269" key="9">
    <source>
    </source>
</evidence>
<evidence type="ECO:0000269" key="10">
    <source>
    </source>
</evidence>
<evidence type="ECO:0000269" key="11">
    <source>
    </source>
</evidence>
<evidence type="ECO:0000303" key="12">
    <source>
    </source>
</evidence>
<evidence type="ECO:0000305" key="13"/>
<evidence type="ECO:0000305" key="14">
    <source>
    </source>
</evidence>
<evidence type="ECO:0000305" key="15">
    <source>
    </source>
</evidence>
<evidence type="ECO:0007744" key="16">
    <source>
        <dbReference type="PDB" id="1MUT"/>
    </source>
</evidence>
<evidence type="ECO:0007744" key="17">
    <source>
        <dbReference type="PDB" id="1PPX"/>
    </source>
</evidence>
<evidence type="ECO:0007744" key="18">
    <source>
        <dbReference type="PDB" id="1PUN"/>
    </source>
</evidence>
<evidence type="ECO:0007744" key="19">
    <source>
        <dbReference type="PDB" id="1PUQ"/>
    </source>
</evidence>
<evidence type="ECO:0007744" key="20">
    <source>
        <dbReference type="PDB" id="1PUS"/>
    </source>
</evidence>
<evidence type="ECO:0007744" key="21">
    <source>
        <dbReference type="PDB" id="1TUM"/>
    </source>
</evidence>
<evidence type="ECO:0007744" key="22">
    <source>
        <dbReference type="PDB" id="3A6S"/>
    </source>
</evidence>
<evidence type="ECO:0007744" key="23">
    <source>
        <dbReference type="PDB" id="3A6T"/>
    </source>
</evidence>
<evidence type="ECO:0007744" key="24">
    <source>
        <dbReference type="PDB" id="3A6U"/>
    </source>
</evidence>
<evidence type="ECO:0007744" key="25">
    <source>
        <dbReference type="PDB" id="3A6V"/>
    </source>
</evidence>
<evidence type="ECO:0007829" key="26">
    <source>
        <dbReference type="PDB" id="1MUT"/>
    </source>
</evidence>
<evidence type="ECO:0007829" key="27">
    <source>
        <dbReference type="PDB" id="1PUN"/>
    </source>
</evidence>
<evidence type="ECO:0007829" key="28">
    <source>
        <dbReference type="PDB" id="1PUQ"/>
    </source>
</evidence>
<evidence type="ECO:0007829" key="29">
    <source>
        <dbReference type="PDB" id="7WW5"/>
    </source>
</evidence>
<evidence type="ECO:0007829" key="30">
    <source>
        <dbReference type="PDB" id="7WW6"/>
    </source>
</evidence>
<gene>
    <name evidence="12" type="primary">mutT</name>
    <name type="ordered locus">b0099</name>
    <name type="ordered locus">JW0097</name>
</gene>
<proteinExistence type="evidence at protein level"/>